<accession>Q6LV39</accession>
<evidence type="ECO:0000255" key="1">
    <source>
        <dbReference type="HAMAP-Rule" id="MF_01183"/>
    </source>
</evidence>
<organism>
    <name type="scientific">Photobacterium profundum (strain SS9)</name>
    <dbReference type="NCBI Taxonomy" id="298386"/>
    <lineage>
        <taxon>Bacteria</taxon>
        <taxon>Pseudomonadati</taxon>
        <taxon>Pseudomonadota</taxon>
        <taxon>Gammaproteobacteria</taxon>
        <taxon>Vibrionales</taxon>
        <taxon>Vibrionaceae</taxon>
        <taxon>Photobacterium</taxon>
    </lineage>
</organism>
<protein>
    <recommendedName>
        <fullName evidence="1">Chaperone SurA</fullName>
    </recommendedName>
    <alternativeName>
        <fullName evidence="1">Peptidyl-prolyl cis-trans isomerase SurA</fullName>
        <shortName evidence="1">PPIase SurA</shortName>
        <ecNumber evidence="1">5.2.1.8</ecNumber>
    </alternativeName>
    <alternativeName>
        <fullName evidence="1">Rotamase SurA</fullName>
    </alternativeName>
</protein>
<comment type="function">
    <text evidence="1">Chaperone involved in the correct folding and assembly of outer membrane proteins. Recognizes specific patterns of aromatic residues and the orientation of their side chains, which are found more frequently in integral outer membrane proteins. May act in both early periplasmic and late outer membrane-associated steps of protein maturation.</text>
</comment>
<comment type="catalytic activity">
    <reaction evidence="1">
        <text>[protein]-peptidylproline (omega=180) = [protein]-peptidylproline (omega=0)</text>
        <dbReference type="Rhea" id="RHEA:16237"/>
        <dbReference type="Rhea" id="RHEA-COMP:10747"/>
        <dbReference type="Rhea" id="RHEA-COMP:10748"/>
        <dbReference type="ChEBI" id="CHEBI:83833"/>
        <dbReference type="ChEBI" id="CHEBI:83834"/>
        <dbReference type="EC" id="5.2.1.8"/>
    </reaction>
</comment>
<comment type="subcellular location">
    <subcellularLocation>
        <location evidence="1">Periplasm</location>
    </subcellularLocation>
    <text evidence="1">Is capable of associating with the outer membrane.</text>
</comment>
<comment type="domain">
    <text evidence="1">The PPIase activity resides only in the second parvulin domain. The N-terminal region and the C-terminal tail are necessary and sufficient for the chaperone activity of SurA. The PPIase activity is dispensable for SurA to function as a chaperone. The N-terminal region and the C-terminal tail are also required for porin recognition.</text>
</comment>
<feature type="signal peptide" evidence="1">
    <location>
        <begin position="1"/>
        <end position="22"/>
    </location>
</feature>
<feature type="chain" id="PRO_0000270023" description="Chaperone SurA">
    <location>
        <begin position="23"/>
        <end position="434"/>
    </location>
</feature>
<feature type="domain" description="PpiC 1" evidence="1">
    <location>
        <begin position="173"/>
        <end position="274"/>
    </location>
</feature>
<feature type="domain" description="PpiC 2" evidence="1">
    <location>
        <begin position="283"/>
        <end position="383"/>
    </location>
</feature>
<gene>
    <name evidence="1" type="primary">surA</name>
    <name type="ordered locus">PBPRA0404</name>
</gene>
<sequence>MKKWKSSLLGIAIWSLAASSMAAPKELDKVVTLVNDSVILQSDVNAMLQTVRINAAEQNQPLPDDALLTEQVMEKLIIETLQLQQAEQFGIRIDDTRLDQAVAEIAKERELTIPQLQKELEKSGISYSIFREQMRRDMTASEARTIQVRRRINILPQEVEMLAEQLNKQTLQTVQFNISHIQLRVEEGATKEQREETQQQAQQIVDELKNGADFANLAYSYSKGPKALQGGEWGWMRQEEMPTIFADQIKSNGKGAIIGPFRSGVGYHIIKVNDVKGLETVSVTEVNARHILIKTSVILSDDGAKRQLEKARQDILAGRQTFADEAQKLSSDPGSAANGGELGWQTPDLYVPEFKDKIETLPKGTISEPFKTVHGWHIVEVLDRRNVDRTDAAMKNRAYRILFSRKFNEEAQAWLQELRAGAYIEQLGTNDDQG</sequence>
<proteinExistence type="inferred from homology"/>
<keyword id="KW-0143">Chaperone</keyword>
<keyword id="KW-0413">Isomerase</keyword>
<keyword id="KW-0574">Periplasm</keyword>
<keyword id="KW-1185">Reference proteome</keyword>
<keyword id="KW-0677">Repeat</keyword>
<keyword id="KW-0697">Rotamase</keyword>
<keyword id="KW-0732">Signal</keyword>
<dbReference type="EC" id="5.2.1.8" evidence="1"/>
<dbReference type="EMBL" id="CR378664">
    <property type="protein sequence ID" value="CAG18836.1"/>
    <property type="molecule type" value="Genomic_DNA"/>
</dbReference>
<dbReference type="RefSeq" id="WP_011217193.1">
    <property type="nucleotide sequence ID" value="NC_006370.1"/>
</dbReference>
<dbReference type="SMR" id="Q6LV39"/>
<dbReference type="STRING" id="298386.PBPRA0404"/>
<dbReference type="KEGG" id="ppr:PBPRA0404"/>
<dbReference type="eggNOG" id="COG0760">
    <property type="taxonomic scope" value="Bacteria"/>
</dbReference>
<dbReference type="HOGENOM" id="CLU_034646_11_0_6"/>
<dbReference type="Proteomes" id="UP000000593">
    <property type="component" value="Chromosome 1"/>
</dbReference>
<dbReference type="GO" id="GO:0030288">
    <property type="term" value="C:outer membrane-bounded periplasmic space"/>
    <property type="evidence" value="ECO:0007669"/>
    <property type="project" value="InterPro"/>
</dbReference>
<dbReference type="GO" id="GO:0042277">
    <property type="term" value="F:peptide binding"/>
    <property type="evidence" value="ECO:0007669"/>
    <property type="project" value="InterPro"/>
</dbReference>
<dbReference type="GO" id="GO:0003755">
    <property type="term" value="F:peptidyl-prolyl cis-trans isomerase activity"/>
    <property type="evidence" value="ECO:0007669"/>
    <property type="project" value="UniProtKB-UniRule"/>
</dbReference>
<dbReference type="GO" id="GO:0051082">
    <property type="term" value="F:unfolded protein binding"/>
    <property type="evidence" value="ECO:0007669"/>
    <property type="project" value="UniProtKB-UniRule"/>
</dbReference>
<dbReference type="GO" id="GO:0043165">
    <property type="term" value="P:Gram-negative-bacterium-type cell outer membrane assembly"/>
    <property type="evidence" value="ECO:0007669"/>
    <property type="project" value="InterPro"/>
</dbReference>
<dbReference type="GO" id="GO:0006457">
    <property type="term" value="P:protein folding"/>
    <property type="evidence" value="ECO:0007669"/>
    <property type="project" value="UniProtKB-UniRule"/>
</dbReference>
<dbReference type="GO" id="GO:0050821">
    <property type="term" value="P:protein stabilization"/>
    <property type="evidence" value="ECO:0007669"/>
    <property type="project" value="InterPro"/>
</dbReference>
<dbReference type="Gene3D" id="3.10.50.40">
    <property type="match status" value="2"/>
</dbReference>
<dbReference type="Gene3D" id="1.10.4030.10">
    <property type="entry name" value="Porin chaperone SurA, peptide-binding domain"/>
    <property type="match status" value="2"/>
</dbReference>
<dbReference type="HAMAP" id="MF_01183">
    <property type="entry name" value="Chaperone_SurA"/>
    <property type="match status" value="1"/>
</dbReference>
<dbReference type="InterPro" id="IPR050280">
    <property type="entry name" value="OMP_Chaperone_SurA"/>
</dbReference>
<dbReference type="InterPro" id="IPR046357">
    <property type="entry name" value="PPIase_dom_sf"/>
</dbReference>
<dbReference type="InterPro" id="IPR000297">
    <property type="entry name" value="PPIase_PpiC"/>
</dbReference>
<dbReference type="InterPro" id="IPR023034">
    <property type="entry name" value="PPIase_SurA"/>
</dbReference>
<dbReference type="InterPro" id="IPR015391">
    <property type="entry name" value="SurA_N"/>
</dbReference>
<dbReference type="InterPro" id="IPR027304">
    <property type="entry name" value="Trigger_fact/SurA_dom_sf"/>
</dbReference>
<dbReference type="NCBIfam" id="NF008038">
    <property type="entry name" value="PRK10770.1"/>
    <property type="match status" value="1"/>
</dbReference>
<dbReference type="PANTHER" id="PTHR47637">
    <property type="entry name" value="CHAPERONE SURA"/>
    <property type="match status" value="1"/>
</dbReference>
<dbReference type="PANTHER" id="PTHR47637:SF1">
    <property type="entry name" value="CHAPERONE SURA"/>
    <property type="match status" value="1"/>
</dbReference>
<dbReference type="Pfam" id="PF13616">
    <property type="entry name" value="Rotamase_3"/>
    <property type="match status" value="2"/>
</dbReference>
<dbReference type="Pfam" id="PF09312">
    <property type="entry name" value="SurA_N"/>
    <property type="match status" value="1"/>
</dbReference>
<dbReference type="SUPFAM" id="SSF54534">
    <property type="entry name" value="FKBP-like"/>
    <property type="match status" value="2"/>
</dbReference>
<dbReference type="SUPFAM" id="SSF109998">
    <property type="entry name" value="Triger factor/SurA peptide-binding domain-like"/>
    <property type="match status" value="1"/>
</dbReference>
<dbReference type="PROSITE" id="PS50198">
    <property type="entry name" value="PPIC_PPIASE_2"/>
    <property type="match status" value="2"/>
</dbReference>
<reference key="1">
    <citation type="journal article" date="2005" name="Science">
        <title>Life at depth: Photobacterium profundum genome sequence and expression analysis.</title>
        <authorList>
            <person name="Vezzi A."/>
            <person name="Campanaro S."/>
            <person name="D'Angelo M."/>
            <person name="Simonato F."/>
            <person name="Vitulo N."/>
            <person name="Lauro F.M."/>
            <person name="Cestaro A."/>
            <person name="Malacrida G."/>
            <person name="Simionati B."/>
            <person name="Cannata N."/>
            <person name="Romualdi C."/>
            <person name="Bartlett D.H."/>
            <person name="Valle G."/>
        </authorList>
    </citation>
    <scope>NUCLEOTIDE SEQUENCE [LARGE SCALE GENOMIC DNA]</scope>
    <source>
        <strain>ATCC BAA-1253 / SS9</strain>
    </source>
</reference>
<name>SURA_PHOPR</name>